<protein>
    <recommendedName>
        <fullName>WD40 repeat-containing protein smu1</fullName>
    </recommendedName>
</protein>
<gene>
    <name type="primary">smu1</name>
    <name type="ORF">DDB_G0278353</name>
</gene>
<name>SMU1_DICDI</name>
<keyword id="KW-0963">Cytoplasm</keyword>
<keyword id="KW-0507">mRNA processing</keyword>
<keyword id="KW-0508">mRNA splicing</keyword>
<keyword id="KW-0539">Nucleus</keyword>
<keyword id="KW-1185">Reference proteome</keyword>
<keyword id="KW-0677">Repeat</keyword>
<keyword id="KW-0747">Spliceosome</keyword>
<keyword id="KW-0853">WD repeat</keyword>
<sequence length="530" mass="60437">MSNPTSTTHHNIEIQSQDVIKLILQFLKENSLGNSLTALQEETGINLNAVDSKETFLNDVKNGNWDSVLTVVSTLRLSTTLLMDLYEQIVELLHLKEYELCKYLIRKTEPLNYMKLNQQERYLKLENHLQREYIDLGDFYKYGITTEKRRKQLIEQLNNEIITVPSSRLLSLLSQSLHWQKHQGIIPDDCMEFDLFKGEVPFKKIESEEEQITTVLDKTIKFNNKNKPETIKFSPDSKYLLTGSMDGFIEVWDYNTGKLSKSLAYQSNDDFMMHDDAILCIAFSKDGEFLATGSLDNKIKVWQIKSGKCLRKFEPAHTNGVTCLQFSRNSTQILSGSFDSSLKIHGLKSGKALKIFRGHQSFVNDCCFNHDEDRVISCSSDGKIKIWDAKSSDCLQTITPTSVVTVRDISIRSITILLKNPEFLLVCNSSQISIVSMKSQTISKTFTSENSKTFLVCTLSPLQNYLYAVDEDNILYTFDFNSGSLLNKFKIHDQEVISISHHPTKNLLATTGSDCLLKIWKSNSNDNINN</sequence>
<organism>
    <name type="scientific">Dictyostelium discoideum</name>
    <name type="common">Social amoeba</name>
    <dbReference type="NCBI Taxonomy" id="44689"/>
    <lineage>
        <taxon>Eukaryota</taxon>
        <taxon>Amoebozoa</taxon>
        <taxon>Evosea</taxon>
        <taxon>Eumycetozoa</taxon>
        <taxon>Dictyostelia</taxon>
        <taxon>Dictyosteliales</taxon>
        <taxon>Dictyosteliaceae</taxon>
        <taxon>Dictyostelium</taxon>
    </lineage>
</organism>
<comment type="function">
    <text evidence="1">Involved in pre-mRNA splicing as a component of the spliceosome.</text>
</comment>
<comment type="subunit">
    <text evidence="1">Component of the spliceosome B complex.</text>
</comment>
<comment type="subcellular location">
    <subcellularLocation>
        <location evidence="3">Cytoplasm</location>
    </subcellularLocation>
    <subcellularLocation>
        <location evidence="2">Nucleus</location>
    </subcellularLocation>
    <subcellularLocation>
        <location evidence="2">Nucleus speckle</location>
    </subcellularLocation>
</comment>
<comment type="similarity">
    <text evidence="5">Belongs to the WD repeat SMU1 family.</text>
</comment>
<proteinExistence type="inferred from homology"/>
<reference key="1">
    <citation type="journal article" date="2005" name="Nature">
        <title>The genome of the social amoeba Dictyostelium discoideum.</title>
        <authorList>
            <person name="Eichinger L."/>
            <person name="Pachebat J.A."/>
            <person name="Gloeckner G."/>
            <person name="Rajandream M.A."/>
            <person name="Sucgang R."/>
            <person name="Berriman M."/>
            <person name="Song J."/>
            <person name="Olsen R."/>
            <person name="Szafranski K."/>
            <person name="Xu Q."/>
            <person name="Tunggal B."/>
            <person name="Kummerfeld S."/>
            <person name="Madera M."/>
            <person name="Konfortov B.A."/>
            <person name="Rivero F."/>
            <person name="Bankier A.T."/>
            <person name="Lehmann R."/>
            <person name="Hamlin N."/>
            <person name="Davies R."/>
            <person name="Gaudet P."/>
            <person name="Fey P."/>
            <person name="Pilcher K."/>
            <person name="Chen G."/>
            <person name="Saunders D."/>
            <person name="Sodergren E.J."/>
            <person name="Davis P."/>
            <person name="Kerhornou A."/>
            <person name="Nie X."/>
            <person name="Hall N."/>
            <person name="Anjard C."/>
            <person name="Hemphill L."/>
            <person name="Bason N."/>
            <person name="Farbrother P."/>
            <person name="Desany B."/>
            <person name="Just E."/>
            <person name="Morio T."/>
            <person name="Rost R."/>
            <person name="Churcher C.M."/>
            <person name="Cooper J."/>
            <person name="Haydock S."/>
            <person name="van Driessche N."/>
            <person name="Cronin A."/>
            <person name="Goodhead I."/>
            <person name="Muzny D.M."/>
            <person name="Mourier T."/>
            <person name="Pain A."/>
            <person name="Lu M."/>
            <person name="Harper D."/>
            <person name="Lindsay R."/>
            <person name="Hauser H."/>
            <person name="James K.D."/>
            <person name="Quiles M."/>
            <person name="Madan Babu M."/>
            <person name="Saito T."/>
            <person name="Buchrieser C."/>
            <person name="Wardroper A."/>
            <person name="Felder M."/>
            <person name="Thangavelu M."/>
            <person name="Johnson D."/>
            <person name="Knights A."/>
            <person name="Loulseged H."/>
            <person name="Mungall K.L."/>
            <person name="Oliver K."/>
            <person name="Price C."/>
            <person name="Quail M.A."/>
            <person name="Urushihara H."/>
            <person name="Hernandez J."/>
            <person name="Rabbinowitsch E."/>
            <person name="Steffen D."/>
            <person name="Sanders M."/>
            <person name="Ma J."/>
            <person name="Kohara Y."/>
            <person name="Sharp S."/>
            <person name="Simmonds M.N."/>
            <person name="Spiegler S."/>
            <person name="Tivey A."/>
            <person name="Sugano S."/>
            <person name="White B."/>
            <person name="Walker D."/>
            <person name="Woodward J.R."/>
            <person name="Winckler T."/>
            <person name="Tanaka Y."/>
            <person name="Shaulsky G."/>
            <person name="Schleicher M."/>
            <person name="Weinstock G.M."/>
            <person name="Rosenthal A."/>
            <person name="Cox E.C."/>
            <person name="Chisholm R.L."/>
            <person name="Gibbs R.A."/>
            <person name="Loomis W.F."/>
            <person name="Platzer M."/>
            <person name="Kay R.R."/>
            <person name="Williams J.G."/>
            <person name="Dear P.H."/>
            <person name="Noegel A.A."/>
            <person name="Barrell B.G."/>
            <person name="Kuspa A."/>
        </authorList>
    </citation>
    <scope>NUCLEOTIDE SEQUENCE [LARGE SCALE GENOMIC DNA]</scope>
    <source>
        <strain>AX4</strain>
    </source>
</reference>
<dbReference type="EMBL" id="AAFI02000023">
    <property type="protein sequence ID" value="EAL68349.2"/>
    <property type="molecule type" value="Genomic_DNA"/>
</dbReference>
<dbReference type="RefSeq" id="XP_642306.2">
    <property type="nucleotide sequence ID" value="XM_637214.2"/>
</dbReference>
<dbReference type="SMR" id="Q54Y96"/>
<dbReference type="FunCoup" id="Q54Y96">
    <property type="interactions" value="818"/>
</dbReference>
<dbReference type="STRING" id="44689.Q54Y96"/>
<dbReference type="PaxDb" id="44689-DDB0233537"/>
<dbReference type="EnsemblProtists" id="EAL68349">
    <property type="protein sequence ID" value="EAL68349"/>
    <property type="gene ID" value="DDB_G0278353"/>
</dbReference>
<dbReference type="GeneID" id="8621512"/>
<dbReference type="KEGG" id="ddi:DDB_G0278353"/>
<dbReference type="dictyBase" id="DDB_G0278353">
    <property type="gene designation" value="smu1"/>
</dbReference>
<dbReference type="VEuPathDB" id="AmoebaDB:DDB_G0278353"/>
<dbReference type="eggNOG" id="KOG0275">
    <property type="taxonomic scope" value="Eukaryota"/>
</dbReference>
<dbReference type="HOGENOM" id="CLU_000288_57_38_1"/>
<dbReference type="InParanoid" id="Q54Y96"/>
<dbReference type="OMA" id="MMKQQEP"/>
<dbReference type="PhylomeDB" id="Q54Y96"/>
<dbReference type="PRO" id="PR:Q54Y96"/>
<dbReference type="Proteomes" id="UP000002195">
    <property type="component" value="Chromosome 3"/>
</dbReference>
<dbReference type="GO" id="GO:0005737">
    <property type="term" value="C:cytoplasm"/>
    <property type="evidence" value="ECO:0007669"/>
    <property type="project" value="UniProtKB-SubCell"/>
</dbReference>
<dbReference type="GO" id="GO:0016607">
    <property type="term" value="C:nuclear speck"/>
    <property type="evidence" value="ECO:0007669"/>
    <property type="project" value="UniProtKB-SubCell"/>
</dbReference>
<dbReference type="GO" id="GO:0071011">
    <property type="term" value="C:precatalytic spliceosome"/>
    <property type="evidence" value="ECO:0000318"/>
    <property type="project" value="GO_Central"/>
</dbReference>
<dbReference type="GO" id="GO:0000398">
    <property type="term" value="P:mRNA splicing, via spliceosome"/>
    <property type="evidence" value="ECO:0007669"/>
    <property type="project" value="InterPro"/>
</dbReference>
<dbReference type="GO" id="GO:0008380">
    <property type="term" value="P:RNA splicing"/>
    <property type="evidence" value="ECO:0000318"/>
    <property type="project" value="GO_Central"/>
</dbReference>
<dbReference type="CDD" id="cd00200">
    <property type="entry name" value="WD40"/>
    <property type="match status" value="1"/>
</dbReference>
<dbReference type="Gene3D" id="2.130.10.10">
    <property type="entry name" value="YVTN repeat-like/Quinoprotein amine dehydrogenase"/>
    <property type="match status" value="3"/>
</dbReference>
<dbReference type="InterPro" id="IPR020472">
    <property type="entry name" value="G-protein_beta_WD-40_rep"/>
</dbReference>
<dbReference type="InterPro" id="IPR006594">
    <property type="entry name" value="LisH"/>
</dbReference>
<dbReference type="InterPro" id="IPR045184">
    <property type="entry name" value="SMU1"/>
</dbReference>
<dbReference type="InterPro" id="IPR054532">
    <property type="entry name" value="TPL_SMU1_LisH-like"/>
</dbReference>
<dbReference type="InterPro" id="IPR015943">
    <property type="entry name" value="WD40/YVTN_repeat-like_dom_sf"/>
</dbReference>
<dbReference type="InterPro" id="IPR019775">
    <property type="entry name" value="WD40_repeat_CS"/>
</dbReference>
<dbReference type="InterPro" id="IPR036322">
    <property type="entry name" value="WD40_repeat_dom_sf"/>
</dbReference>
<dbReference type="InterPro" id="IPR001680">
    <property type="entry name" value="WD40_rpt"/>
</dbReference>
<dbReference type="PANTHER" id="PTHR22848">
    <property type="entry name" value="WD40 REPEAT PROTEIN"/>
    <property type="match status" value="1"/>
</dbReference>
<dbReference type="Pfam" id="PF17814">
    <property type="entry name" value="LisH_TPL"/>
    <property type="match status" value="1"/>
</dbReference>
<dbReference type="Pfam" id="PF00400">
    <property type="entry name" value="WD40"/>
    <property type="match status" value="5"/>
</dbReference>
<dbReference type="PRINTS" id="PR00320">
    <property type="entry name" value="GPROTEINBRPT"/>
</dbReference>
<dbReference type="SMART" id="SM00667">
    <property type="entry name" value="LisH"/>
    <property type="match status" value="1"/>
</dbReference>
<dbReference type="SMART" id="SM00320">
    <property type="entry name" value="WD40"/>
    <property type="match status" value="6"/>
</dbReference>
<dbReference type="SUPFAM" id="SSF50978">
    <property type="entry name" value="WD40 repeat-like"/>
    <property type="match status" value="1"/>
</dbReference>
<dbReference type="PROSITE" id="PS50896">
    <property type="entry name" value="LISH"/>
    <property type="match status" value="1"/>
</dbReference>
<dbReference type="PROSITE" id="PS00678">
    <property type="entry name" value="WD_REPEATS_1"/>
    <property type="match status" value="1"/>
</dbReference>
<dbReference type="PROSITE" id="PS50082">
    <property type="entry name" value="WD_REPEATS_2"/>
    <property type="match status" value="5"/>
</dbReference>
<dbReference type="PROSITE" id="PS50294">
    <property type="entry name" value="WD_REPEATS_REGION"/>
    <property type="match status" value="1"/>
</dbReference>
<evidence type="ECO:0000250" key="1">
    <source>
        <dbReference type="UniProtKB" id="Q2TAY7"/>
    </source>
</evidence>
<evidence type="ECO:0000250" key="2">
    <source>
        <dbReference type="UniProtKB" id="Q76B40"/>
    </source>
</evidence>
<evidence type="ECO:0000250" key="3">
    <source>
        <dbReference type="UniProtKB" id="Q99M63"/>
    </source>
</evidence>
<evidence type="ECO:0000255" key="4">
    <source>
        <dbReference type="PROSITE-ProRule" id="PRU00126"/>
    </source>
</evidence>
<evidence type="ECO:0000305" key="5"/>
<feature type="chain" id="PRO_0000328157" description="WD40 repeat-containing protein smu1">
    <location>
        <begin position="1"/>
        <end position="530"/>
    </location>
</feature>
<feature type="domain" description="LisH" evidence="4">
    <location>
        <begin position="15"/>
        <end position="47"/>
    </location>
</feature>
<feature type="domain" description="CTLH">
    <location>
        <begin position="49"/>
        <end position="100"/>
    </location>
</feature>
<feature type="repeat" description="WD 1">
    <location>
        <begin position="223"/>
        <end position="262"/>
    </location>
</feature>
<feature type="repeat" description="WD 2">
    <location>
        <begin position="273"/>
        <end position="314"/>
    </location>
</feature>
<feature type="repeat" description="WD 3">
    <location>
        <begin position="316"/>
        <end position="357"/>
    </location>
</feature>
<feature type="repeat" description="WD 4">
    <location>
        <begin position="358"/>
        <end position="397"/>
    </location>
</feature>
<feature type="repeat" description="WD 5">
    <location>
        <begin position="449"/>
        <end position="490"/>
    </location>
</feature>
<feature type="repeat" description="WD 6">
    <location>
        <begin position="491"/>
        <end position="530"/>
    </location>
</feature>
<accession>Q54Y96</accession>